<organismHost>
    <name type="scientific">Galliformes</name>
    <dbReference type="NCBI Taxonomy" id="8976"/>
</organismHost>
<evidence type="ECO:0000250" key="1"/>
<evidence type="ECO:0000255" key="2"/>
<evidence type="ECO:0000305" key="3"/>
<accession>P33498</accession>
<feature type="chain" id="PRO_0000239545" description="Envelope glycoprotein">
    <location>
        <begin position="1" status="less than"/>
        <end position="257"/>
    </location>
</feature>
<feature type="chain" id="PRO_0000040681" description="Surface protein" evidence="1">
    <location>
        <begin position="1" status="less than"/>
        <end position="78"/>
    </location>
</feature>
<feature type="chain" id="PRO_0000040682" description="Transmembrane protein" evidence="1">
    <location>
        <begin position="79"/>
        <end position="257"/>
    </location>
</feature>
<feature type="topological domain" description="Extracellular" evidence="2">
    <location>
        <begin position="1" status="less than"/>
        <end position="229"/>
    </location>
</feature>
<feature type="transmembrane region" description="Helical" evidence="2">
    <location>
        <begin position="230"/>
        <end position="250"/>
    </location>
</feature>
<feature type="topological domain" description="Cytoplasmic" evidence="2">
    <location>
        <begin position="251"/>
        <end position="257"/>
    </location>
</feature>
<feature type="region of interest" description="Fusion peptide" evidence="2">
    <location>
        <begin position="95"/>
        <end position="115"/>
    </location>
</feature>
<feature type="region of interest" description="Immunosuppression" evidence="1">
    <location>
        <begin position="151"/>
        <end position="167"/>
    </location>
</feature>
<feature type="coiled-coil region" evidence="2">
    <location>
        <begin position="112"/>
        <end position="162"/>
    </location>
</feature>
<feature type="coiled-coil region" evidence="2">
    <location>
        <begin position="180"/>
        <end position="210"/>
    </location>
</feature>
<feature type="site" description="Cleavage; by host" evidence="1">
    <location>
        <begin position="78"/>
        <end position="79"/>
    </location>
</feature>
<feature type="lipid moiety-binding region" description="S-palmitoyl cysteine; by host" evidence="1">
    <location>
        <position position="245"/>
    </location>
</feature>
<feature type="glycosylation site" description="N-linked (GlcNAc...) asparagine; by host" evidence="2">
    <location>
        <position position="15"/>
    </location>
</feature>
<feature type="glycosylation site" description="N-linked (GlcNAc...) asparagine; by host" evidence="2">
    <location>
        <position position="58"/>
    </location>
</feature>
<feature type="glycosylation site" description="N-linked (GlcNAc...) asparagine; by host" evidence="2">
    <location>
        <position position="68"/>
    </location>
</feature>
<feature type="glycosylation site" description="N-linked (GlcNAc...) asparagine; by host" evidence="2">
    <location>
        <position position="130"/>
    </location>
</feature>
<feature type="glycosylation site" description="N-linked (GlcNAc...) asparagine; by host" evidence="2">
    <location>
        <position position="178"/>
    </location>
</feature>
<feature type="non-terminal residue">
    <location>
        <position position="1"/>
    </location>
</feature>
<dbReference type="EMBL" id="M92847">
    <property type="protein sequence ID" value="AAA42673.1"/>
    <property type="status" value="ALT_TERM"/>
    <property type="molecule type" value="mRNA"/>
</dbReference>
<dbReference type="PIR" id="A43362">
    <property type="entry name" value="A43362"/>
</dbReference>
<dbReference type="SMR" id="P33498"/>
<dbReference type="GlyCosmos" id="P33498">
    <property type="glycosylation" value="5 sites, No reported glycans"/>
</dbReference>
<dbReference type="GO" id="GO:0020002">
    <property type="term" value="C:host cell plasma membrane"/>
    <property type="evidence" value="ECO:0007669"/>
    <property type="project" value="UniProtKB-SubCell"/>
</dbReference>
<dbReference type="GO" id="GO:0016020">
    <property type="term" value="C:membrane"/>
    <property type="evidence" value="ECO:0007669"/>
    <property type="project" value="UniProtKB-KW"/>
</dbReference>
<dbReference type="GO" id="GO:0019031">
    <property type="term" value="C:viral envelope"/>
    <property type="evidence" value="ECO:0007669"/>
    <property type="project" value="UniProtKB-KW"/>
</dbReference>
<dbReference type="GO" id="GO:0055036">
    <property type="term" value="C:virion membrane"/>
    <property type="evidence" value="ECO:0007669"/>
    <property type="project" value="UniProtKB-SubCell"/>
</dbReference>
<dbReference type="GO" id="GO:0019064">
    <property type="term" value="P:fusion of virus membrane with host plasma membrane"/>
    <property type="evidence" value="ECO:0007669"/>
    <property type="project" value="UniProtKB-KW"/>
</dbReference>
<dbReference type="GO" id="GO:0046718">
    <property type="term" value="P:symbiont entry into host cell"/>
    <property type="evidence" value="ECO:0007669"/>
    <property type="project" value="UniProtKB-KW"/>
</dbReference>
<dbReference type="GO" id="GO:0019062">
    <property type="term" value="P:virion attachment to host cell"/>
    <property type="evidence" value="ECO:0007669"/>
    <property type="project" value="UniProtKB-KW"/>
</dbReference>
<dbReference type="CDD" id="cd09949">
    <property type="entry name" value="RSV-like_HR1-HR2"/>
    <property type="match status" value="1"/>
</dbReference>
<dbReference type="Gene3D" id="1.10.287.210">
    <property type="match status" value="1"/>
</dbReference>
<dbReference type="InterPro" id="IPR005166">
    <property type="entry name" value="RSV_p95_env"/>
</dbReference>
<dbReference type="InterPro" id="IPR018154">
    <property type="entry name" value="TLV/ENV_coat_polyprotein"/>
</dbReference>
<dbReference type="PANTHER" id="PTHR10424:SF73">
    <property type="entry name" value="ENDOGENOUS RETROVIRUS GROUP FC1 ENV POLYPROTEIN-RELATED"/>
    <property type="match status" value="1"/>
</dbReference>
<dbReference type="PANTHER" id="PTHR10424">
    <property type="entry name" value="VIRAL ENVELOPE PROTEIN"/>
    <property type="match status" value="1"/>
</dbReference>
<dbReference type="Pfam" id="PF03708">
    <property type="entry name" value="Avian_gp85"/>
    <property type="match status" value="1"/>
</dbReference>
<dbReference type="Pfam" id="PF00429">
    <property type="entry name" value="TLV_coat"/>
    <property type="match status" value="1"/>
</dbReference>
<dbReference type="SUPFAM" id="SSF58069">
    <property type="entry name" value="Virus ectodomain"/>
    <property type="match status" value="1"/>
</dbReference>
<sequence length="257" mass="27916">FPILPGVWVDSTQGNFTKPKALPPAIFLICGDRAWQGIPSRPVGGPCYLGKLTMLAPNHTDIHKILANSSQTGVRHFRSVSHLDDTCSDEVQLWGPTARIFASILAPGVAAAQALREIERLACWSVKQANLTTSLLGDLLDDVTSIRHAVLQNRAAIDFLLLAHGHGCKDIAGMCCFNLSDHSEAIQKKFQLMKEHVNKIGVDSDPIGSWLRGLFGGIGEWAIHLLKGLLLGLVVILLLVVCLPCLLQFVSSSTRKM</sequence>
<gene>
    <name type="primary">env</name>
</gene>
<comment type="function">
    <text evidence="1">The surface protein (SU) attaches the virus to the host cell by binding to its receptor. This interaction triggers the refolding of the transmembrane protein (TM) and is thought to activate its fusogenic potential by unmasking its fusion peptide. Fusion occurs at the host cell plasma membrane (By similarity).</text>
</comment>
<comment type="function">
    <text evidence="1">The transmembrane protein (TM) acts as a class I viral fusion protein. Under the current model, the protein has at least 3 conformational states: pre-fusion native state, pre-hairpin intermediate state, and post-fusion hairpin state. During viral and target cell membrane fusion, the coiled coil regions (heptad repeats) assume a trimer-of-hairpins structure, positioning the fusion peptide in close proximity to the C-terminal region of the ectodomain. The formation of this structure appears to drive apposition and subsequent fusion of viral and target cell membranes. Membranes fusion leads to delivery of the nucleocapsid into the cytoplasm (By similarity).</text>
</comment>
<comment type="subunit">
    <text evidence="1">The mature envelope protein (Env) consists of a trimer of SU-TM heterodimers attached by noncovalent interactions or by a labile interchain disulfide bond.</text>
</comment>
<comment type="subcellular location">
    <molecule>Transmembrane protein</molecule>
    <subcellularLocation>
        <location evidence="1">Virion membrane</location>
        <topology evidence="1">Single-pass type I membrane protein</topology>
    </subcellularLocation>
    <subcellularLocation>
        <location evidence="1">Host cell membrane</location>
        <topology evidence="1">Single-pass type I membrane protein</topology>
    </subcellularLocation>
    <text evidence="1">It is probably concentrated at the site of budding and incorporated into the virions possibly by contacts between the cytoplasmic tail of Env and the N-terminus of Gag.</text>
</comment>
<comment type="subcellular location">
    <molecule>Surface protein</molecule>
    <subcellularLocation>
        <location evidence="1">Virion membrane</location>
        <topology evidence="1">Peripheral membrane protein</topology>
    </subcellularLocation>
    <subcellularLocation>
        <location evidence="1">Host cell membrane</location>
        <topology evidence="1">Peripheral membrane protein</topology>
    </subcellularLocation>
    <text evidence="1">The surface protein is not anchored to the viral envelope, but associates with the extravirion surface through its binding to TM. It is probably concentrated at the site of budding and incorporated into the virions possibly by contacts between the cytoplasmic tail of Env and the N-terminus of Gag (By similarity).</text>
</comment>
<comment type="domain">
    <text evidence="1">The 17 amino acids long immunosuppressive region is present in many retroviral envelope proteins. Synthetic peptides derived from this relatively conserved sequence inhibit immune function in vitro and in vivo (By similarity).</text>
</comment>
<comment type="PTM">
    <text evidence="1">Specific enzymatic cleavages in vivo yield mature proteins. Envelope glycoproteins are synthesized as an inactive precursor that is N-glycosylated and processed likely by host cell furin or by a furin-like protease in the Golgi to yield the mature SU and TM proteins. The cleavage site between SU and TM requires the minimal sequence [KR]-X-[KR]-R (By similarity).</text>
</comment>
<comment type="PTM">
    <text evidence="1">The transmembrane protein is palmitoylated.</text>
</comment>
<comment type="miscellaneous">
    <text>This protein is synthesized as a Env-Ryk chimeric protein and then cellular protease cleaves this precursor into gp85 and the putative oncogene termed gp69 (gp37-Ryk). The sequence shown here corresponds to the Env (gp85-gp37) homolog fragment of the chimera.</text>
</comment>
<comment type="caution">
    <text evidence="3">The cleavage site does not match the consensus used by furin.</text>
</comment>
<organism>
    <name type="scientific">Avian retrovirus RPL30</name>
    <dbReference type="NCBI Taxonomy" id="31671"/>
    <lineage>
        <taxon>Viruses</taxon>
        <taxon>Riboviria</taxon>
        <taxon>Pararnavirae</taxon>
        <taxon>Artverviricota</taxon>
        <taxon>Revtraviricetes</taxon>
        <taxon>Ortervirales</taxon>
        <taxon>Retroviridae</taxon>
        <taxon>Orthoretrovirinae</taxon>
        <taxon>Alpharetrovirus</taxon>
        <taxon>Avian leukosis virus</taxon>
    </lineage>
</organism>
<reference key="1">
    <citation type="journal article" date="1992" name="J. Virol.">
        <title>A novel oncogene, v-ryk, encoding a truncated receptor tyrosine kinase is transduced into the RPL30 virus without loss of viral sequences.</title>
        <authorList>
            <person name="Jia R."/>
            <person name="Mayer B.J."/>
            <person name="Hanafusa T."/>
            <person name="Hanafusa H."/>
        </authorList>
    </citation>
    <scope>NUCLEOTIDE SEQUENCE [MRNA]</scope>
</reference>
<keyword id="KW-0165">Cleavage on pair of basic residues</keyword>
<keyword id="KW-0175">Coiled coil</keyword>
<keyword id="KW-1015">Disulfide bond</keyword>
<keyword id="KW-1169">Fusion of virus membrane with host cell membrane</keyword>
<keyword id="KW-1168">Fusion of virus membrane with host membrane</keyword>
<keyword id="KW-0325">Glycoprotein</keyword>
<keyword id="KW-1032">Host cell membrane</keyword>
<keyword id="KW-1043">Host membrane</keyword>
<keyword id="KW-0945">Host-virus interaction</keyword>
<keyword id="KW-0449">Lipoprotein</keyword>
<keyword id="KW-0472">Membrane</keyword>
<keyword id="KW-0564">Palmitate</keyword>
<keyword id="KW-0812">Transmembrane</keyword>
<keyword id="KW-1133">Transmembrane helix</keyword>
<keyword id="KW-1161">Viral attachment to host cell</keyword>
<keyword id="KW-0261">Viral envelope protein</keyword>
<keyword id="KW-1162">Viral penetration into host cytoplasm</keyword>
<keyword id="KW-0946">Virion</keyword>
<keyword id="KW-1160">Virus entry into host cell</keyword>
<name>ENV_AVIR3</name>
<protein>
    <recommendedName>
        <fullName>Envelope glycoprotein</fullName>
    </recommendedName>
    <alternativeName>
        <fullName>Env polyprotein</fullName>
    </alternativeName>
    <component>
        <recommendedName>
            <fullName>Surface protein</fullName>
            <shortName>SU</shortName>
        </recommendedName>
        <alternativeName>
            <fullName>Glycoprotein 85</fullName>
            <shortName>gp85</shortName>
        </alternativeName>
    </component>
    <component>
        <recommendedName>
            <fullName>Transmembrane protein</fullName>
            <shortName>TM</shortName>
        </recommendedName>
        <alternativeName>
            <fullName>Glycoprotein 37</fullName>
            <shortName>gp37</shortName>
        </alternativeName>
    </component>
</protein>
<proteinExistence type="evidence at transcript level"/>